<comment type="catalytic activity">
    <reaction evidence="1">
        <text>(R)-pantothenate + ATP = (R)-4'-phosphopantothenate + ADP + H(+)</text>
        <dbReference type="Rhea" id="RHEA:16373"/>
        <dbReference type="ChEBI" id="CHEBI:10986"/>
        <dbReference type="ChEBI" id="CHEBI:15378"/>
        <dbReference type="ChEBI" id="CHEBI:29032"/>
        <dbReference type="ChEBI" id="CHEBI:30616"/>
        <dbReference type="ChEBI" id="CHEBI:456216"/>
        <dbReference type="EC" id="2.7.1.33"/>
    </reaction>
</comment>
<comment type="pathway">
    <text evidence="1">Cofactor biosynthesis; coenzyme A biosynthesis; CoA from (R)-pantothenate: step 1/5.</text>
</comment>
<comment type="subcellular location">
    <subcellularLocation>
        <location evidence="1">Cytoplasm</location>
    </subcellularLocation>
</comment>
<comment type="similarity">
    <text evidence="1">Belongs to the prokaryotic pantothenate kinase family.</text>
</comment>
<gene>
    <name evidence="1" type="primary">coaA</name>
    <name type="ordered locus">RBAM_021890</name>
</gene>
<sequence>MKSKELNLHTLYTQHSRESWAGFGGHLSIAVSEEEAKAVEGLNDYLSVEEVETIYIPLVRLLHLHVTSAARRNQHVNVFLKHPHSAKIPFIIGIAGSVAVGKSTTARILQKLLSRLPDRPKVSLVTTDGFLYPTAELKRKNLLSRKGFPESYDVKALLEFLNDIKSGKERVEAPVYSHLTYDREEGAVEVVEGADIVIIEGINVLQSPTLEDDREDPRIFVSDFFDFSIYVDAEESRIFTWYLERFRLLRETAFQDPASYFHKFKDLSDAEADTMAASIWESVNRPNLYENILPTKFRSDLILRKGDGHKVEEVLVRRV</sequence>
<organism>
    <name type="scientific">Bacillus velezensis (strain DSM 23117 / BGSC 10A6 / LMG 26770 / FZB42)</name>
    <name type="common">Bacillus amyloliquefaciens subsp. plantarum</name>
    <dbReference type="NCBI Taxonomy" id="326423"/>
    <lineage>
        <taxon>Bacteria</taxon>
        <taxon>Bacillati</taxon>
        <taxon>Bacillota</taxon>
        <taxon>Bacilli</taxon>
        <taxon>Bacillales</taxon>
        <taxon>Bacillaceae</taxon>
        <taxon>Bacillus</taxon>
        <taxon>Bacillus amyloliquefaciens group</taxon>
    </lineage>
</organism>
<evidence type="ECO:0000255" key="1">
    <source>
        <dbReference type="HAMAP-Rule" id="MF_00215"/>
    </source>
</evidence>
<feature type="chain" id="PRO_1000043210" description="Pantothenate kinase">
    <location>
        <begin position="1"/>
        <end position="319"/>
    </location>
</feature>
<feature type="binding site" evidence="1">
    <location>
        <begin position="96"/>
        <end position="103"/>
    </location>
    <ligand>
        <name>ATP</name>
        <dbReference type="ChEBI" id="CHEBI:30616"/>
    </ligand>
</feature>
<dbReference type="EC" id="2.7.1.33" evidence="1"/>
<dbReference type="EMBL" id="CP000560">
    <property type="protein sequence ID" value="ABS74550.1"/>
    <property type="molecule type" value="Genomic_DNA"/>
</dbReference>
<dbReference type="RefSeq" id="WP_003153290.1">
    <property type="nucleotide sequence ID" value="NC_009725.2"/>
</dbReference>
<dbReference type="SMR" id="A7Z6C4"/>
<dbReference type="GeneID" id="93081326"/>
<dbReference type="KEGG" id="bay:RBAM_021890"/>
<dbReference type="HOGENOM" id="CLU_053818_1_1_9"/>
<dbReference type="UniPathway" id="UPA00241">
    <property type="reaction ID" value="UER00352"/>
</dbReference>
<dbReference type="Proteomes" id="UP000001120">
    <property type="component" value="Chromosome"/>
</dbReference>
<dbReference type="GO" id="GO:0005737">
    <property type="term" value="C:cytoplasm"/>
    <property type="evidence" value="ECO:0007669"/>
    <property type="project" value="UniProtKB-SubCell"/>
</dbReference>
<dbReference type="GO" id="GO:0005524">
    <property type="term" value="F:ATP binding"/>
    <property type="evidence" value="ECO:0007669"/>
    <property type="project" value="UniProtKB-UniRule"/>
</dbReference>
<dbReference type="GO" id="GO:0004594">
    <property type="term" value="F:pantothenate kinase activity"/>
    <property type="evidence" value="ECO:0007669"/>
    <property type="project" value="UniProtKB-UniRule"/>
</dbReference>
<dbReference type="GO" id="GO:0015937">
    <property type="term" value="P:coenzyme A biosynthetic process"/>
    <property type="evidence" value="ECO:0007669"/>
    <property type="project" value="UniProtKB-UniRule"/>
</dbReference>
<dbReference type="CDD" id="cd02025">
    <property type="entry name" value="PanK"/>
    <property type="match status" value="1"/>
</dbReference>
<dbReference type="Gene3D" id="3.40.50.300">
    <property type="entry name" value="P-loop containing nucleotide triphosphate hydrolases"/>
    <property type="match status" value="1"/>
</dbReference>
<dbReference type="HAMAP" id="MF_00215">
    <property type="entry name" value="Pantothen_kinase_1"/>
    <property type="match status" value="1"/>
</dbReference>
<dbReference type="InterPro" id="IPR027417">
    <property type="entry name" value="P-loop_NTPase"/>
</dbReference>
<dbReference type="InterPro" id="IPR004566">
    <property type="entry name" value="PanK"/>
</dbReference>
<dbReference type="InterPro" id="IPR006083">
    <property type="entry name" value="PRK/URK"/>
</dbReference>
<dbReference type="NCBIfam" id="TIGR00554">
    <property type="entry name" value="panK_bact"/>
    <property type="match status" value="1"/>
</dbReference>
<dbReference type="PANTHER" id="PTHR10285">
    <property type="entry name" value="URIDINE KINASE"/>
    <property type="match status" value="1"/>
</dbReference>
<dbReference type="Pfam" id="PF00485">
    <property type="entry name" value="PRK"/>
    <property type="match status" value="1"/>
</dbReference>
<dbReference type="PIRSF" id="PIRSF000545">
    <property type="entry name" value="Pantothenate_kin"/>
    <property type="match status" value="1"/>
</dbReference>
<dbReference type="SUPFAM" id="SSF52540">
    <property type="entry name" value="P-loop containing nucleoside triphosphate hydrolases"/>
    <property type="match status" value="1"/>
</dbReference>
<keyword id="KW-0067">ATP-binding</keyword>
<keyword id="KW-0173">Coenzyme A biosynthesis</keyword>
<keyword id="KW-0963">Cytoplasm</keyword>
<keyword id="KW-0418">Kinase</keyword>
<keyword id="KW-0547">Nucleotide-binding</keyword>
<keyword id="KW-0808">Transferase</keyword>
<name>COAA_BACVZ</name>
<accession>A7Z6C4</accession>
<protein>
    <recommendedName>
        <fullName evidence="1">Pantothenate kinase</fullName>
        <ecNumber evidence="1">2.7.1.33</ecNumber>
    </recommendedName>
    <alternativeName>
        <fullName evidence="1">Pantothenic acid kinase</fullName>
    </alternativeName>
</protein>
<proteinExistence type="inferred from homology"/>
<reference key="1">
    <citation type="journal article" date="2007" name="Nat. Biotechnol.">
        <title>Comparative analysis of the complete genome sequence of the plant growth-promoting bacterium Bacillus amyloliquefaciens FZB42.</title>
        <authorList>
            <person name="Chen X.H."/>
            <person name="Koumoutsi A."/>
            <person name="Scholz R."/>
            <person name="Eisenreich A."/>
            <person name="Schneider K."/>
            <person name="Heinemeyer I."/>
            <person name="Morgenstern B."/>
            <person name="Voss B."/>
            <person name="Hess W.R."/>
            <person name="Reva O."/>
            <person name="Junge H."/>
            <person name="Voigt B."/>
            <person name="Jungblut P.R."/>
            <person name="Vater J."/>
            <person name="Suessmuth R."/>
            <person name="Liesegang H."/>
            <person name="Strittmatter A."/>
            <person name="Gottschalk G."/>
            <person name="Borriss R."/>
        </authorList>
    </citation>
    <scope>NUCLEOTIDE SEQUENCE [LARGE SCALE GENOMIC DNA]</scope>
    <source>
        <strain>DSM 23117 / BGSC 10A6 / LMG 26770 / FZB42</strain>
    </source>
</reference>